<gene>
    <name evidence="1" type="primary">carA</name>
    <name type="ordered locus">mlr2489</name>
</gene>
<keyword id="KW-0028">Amino-acid biosynthesis</keyword>
<keyword id="KW-0055">Arginine biosynthesis</keyword>
<keyword id="KW-0067">ATP-binding</keyword>
<keyword id="KW-0315">Glutamine amidotransferase</keyword>
<keyword id="KW-0436">Ligase</keyword>
<keyword id="KW-0547">Nucleotide-binding</keyword>
<keyword id="KW-0665">Pyrimidine biosynthesis</keyword>
<reference key="1">
    <citation type="journal article" date="2000" name="DNA Res.">
        <title>Complete genome structure of the nitrogen-fixing symbiotic bacterium Mesorhizobium loti.</title>
        <authorList>
            <person name="Kaneko T."/>
            <person name="Nakamura Y."/>
            <person name="Sato S."/>
            <person name="Asamizu E."/>
            <person name="Kato T."/>
            <person name="Sasamoto S."/>
            <person name="Watanabe A."/>
            <person name="Idesawa K."/>
            <person name="Ishikawa A."/>
            <person name="Kawashima K."/>
            <person name="Kimura T."/>
            <person name="Kishida Y."/>
            <person name="Kiyokawa C."/>
            <person name="Kohara M."/>
            <person name="Matsumoto M."/>
            <person name="Matsuno A."/>
            <person name="Mochizuki Y."/>
            <person name="Nakayama S."/>
            <person name="Nakazaki N."/>
            <person name="Shimpo S."/>
            <person name="Sugimoto M."/>
            <person name="Takeuchi C."/>
            <person name="Yamada M."/>
            <person name="Tabata S."/>
        </authorList>
    </citation>
    <scope>NUCLEOTIDE SEQUENCE [LARGE SCALE GENOMIC DNA]</scope>
    <source>
        <strain>LMG 29417 / CECT 9101 / MAFF 303099</strain>
    </source>
</reference>
<dbReference type="EC" id="6.3.5.5" evidence="1"/>
<dbReference type="EMBL" id="BA000012">
    <property type="protein sequence ID" value="BAB49609.1"/>
    <property type="molecule type" value="Genomic_DNA"/>
</dbReference>
<dbReference type="SMR" id="Q98IA7"/>
<dbReference type="MEROPS" id="C26.954"/>
<dbReference type="KEGG" id="mlo:mlr2489"/>
<dbReference type="eggNOG" id="COG0505">
    <property type="taxonomic scope" value="Bacteria"/>
</dbReference>
<dbReference type="HOGENOM" id="CLU_035901_2_2_5"/>
<dbReference type="UniPathway" id="UPA00068">
    <property type="reaction ID" value="UER00171"/>
</dbReference>
<dbReference type="UniPathway" id="UPA00070">
    <property type="reaction ID" value="UER00115"/>
</dbReference>
<dbReference type="Proteomes" id="UP000000552">
    <property type="component" value="Chromosome"/>
</dbReference>
<dbReference type="GO" id="GO:0005524">
    <property type="term" value="F:ATP binding"/>
    <property type="evidence" value="ECO:0007669"/>
    <property type="project" value="UniProtKB-UniRule"/>
</dbReference>
<dbReference type="GO" id="GO:0004088">
    <property type="term" value="F:carbamoyl-phosphate synthase (glutamine-hydrolyzing) activity"/>
    <property type="evidence" value="ECO:0007669"/>
    <property type="project" value="UniProtKB-UniRule"/>
</dbReference>
<dbReference type="GO" id="GO:0004359">
    <property type="term" value="F:glutaminase activity"/>
    <property type="evidence" value="ECO:0007669"/>
    <property type="project" value="RHEA"/>
</dbReference>
<dbReference type="GO" id="GO:0006207">
    <property type="term" value="P:'de novo' pyrimidine nucleobase biosynthetic process"/>
    <property type="evidence" value="ECO:0007669"/>
    <property type="project" value="InterPro"/>
</dbReference>
<dbReference type="GO" id="GO:0044205">
    <property type="term" value="P:'de novo' UMP biosynthetic process"/>
    <property type="evidence" value="ECO:0007669"/>
    <property type="project" value="UniProtKB-UniRule"/>
</dbReference>
<dbReference type="GO" id="GO:0006541">
    <property type="term" value="P:glutamine metabolic process"/>
    <property type="evidence" value="ECO:0007669"/>
    <property type="project" value="InterPro"/>
</dbReference>
<dbReference type="GO" id="GO:0006526">
    <property type="term" value="P:L-arginine biosynthetic process"/>
    <property type="evidence" value="ECO:0007669"/>
    <property type="project" value="UniProtKB-UniRule"/>
</dbReference>
<dbReference type="CDD" id="cd01744">
    <property type="entry name" value="GATase1_CPSase"/>
    <property type="match status" value="1"/>
</dbReference>
<dbReference type="FunFam" id="3.50.30.20:FF:000001">
    <property type="entry name" value="Carbamoyl-phosphate synthase small chain"/>
    <property type="match status" value="1"/>
</dbReference>
<dbReference type="Gene3D" id="3.40.50.880">
    <property type="match status" value="1"/>
</dbReference>
<dbReference type="Gene3D" id="3.50.30.20">
    <property type="entry name" value="Carbamoyl-phosphate synthase small subunit, N-terminal domain"/>
    <property type="match status" value="1"/>
</dbReference>
<dbReference type="HAMAP" id="MF_01209">
    <property type="entry name" value="CPSase_S_chain"/>
    <property type="match status" value="1"/>
</dbReference>
<dbReference type="InterPro" id="IPR050472">
    <property type="entry name" value="Anth_synth/Amidotransfase"/>
</dbReference>
<dbReference type="InterPro" id="IPR006274">
    <property type="entry name" value="CarbamoylP_synth_ssu"/>
</dbReference>
<dbReference type="InterPro" id="IPR002474">
    <property type="entry name" value="CarbamoylP_synth_ssu_N"/>
</dbReference>
<dbReference type="InterPro" id="IPR036480">
    <property type="entry name" value="CarbP_synth_ssu_N_sf"/>
</dbReference>
<dbReference type="InterPro" id="IPR029062">
    <property type="entry name" value="Class_I_gatase-like"/>
</dbReference>
<dbReference type="InterPro" id="IPR035686">
    <property type="entry name" value="CPSase_GATase1"/>
</dbReference>
<dbReference type="InterPro" id="IPR017926">
    <property type="entry name" value="GATASE"/>
</dbReference>
<dbReference type="NCBIfam" id="TIGR01368">
    <property type="entry name" value="CPSaseIIsmall"/>
    <property type="match status" value="1"/>
</dbReference>
<dbReference type="NCBIfam" id="NF009475">
    <property type="entry name" value="PRK12838.1"/>
    <property type="match status" value="1"/>
</dbReference>
<dbReference type="PANTHER" id="PTHR43418:SF7">
    <property type="entry name" value="CARBAMOYL-PHOSPHATE SYNTHASE SMALL CHAIN"/>
    <property type="match status" value="1"/>
</dbReference>
<dbReference type="PANTHER" id="PTHR43418">
    <property type="entry name" value="MULTIFUNCTIONAL TRYPTOPHAN BIOSYNTHESIS PROTEIN-RELATED"/>
    <property type="match status" value="1"/>
</dbReference>
<dbReference type="Pfam" id="PF00988">
    <property type="entry name" value="CPSase_sm_chain"/>
    <property type="match status" value="1"/>
</dbReference>
<dbReference type="Pfam" id="PF00117">
    <property type="entry name" value="GATase"/>
    <property type="match status" value="1"/>
</dbReference>
<dbReference type="PRINTS" id="PR00097">
    <property type="entry name" value="ANTSNTHASEII"/>
</dbReference>
<dbReference type="PRINTS" id="PR00099">
    <property type="entry name" value="CPSGATASE"/>
</dbReference>
<dbReference type="PRINTS" id="PR00096">
    <property type="entry name" value="GATASE"/>
</dbReference>
<dbReference type="SMART" id="SM01097">
    <property type="entry name" value="CPSase_sm_chain"/>
    <property type="match status" value="1"/>
</dbReference>
<dbReference type="SUPFAM" id="SSF52021">
    <property type="entry name" value="Carbamoyl phosphate synthetase, small subunit N-terminal domain"/>
    <property type="match status" value="1"/>
</dbReference>
<dbReference type="SUPFAM" id="SSF52317">
    <property type="entry name" value="Class I glutamine amidotransferase-like"/>
    <property type="match status" value="1"/>
</dbReference>
<dbReference type="PROSITE" id="PS51273">
    <property type="entry name" value="GATASE_TYPE_1"/>
    <property type="match status" value="1"/>
</dbReference>
<comment type="function">
    <text evidence="1">Small subunit of the glutamine-dependent carbamoyl phosphate synthetase (CPSase). CPSase catalyzes the formation of carbamoyl phosphate from the ammonia moiety of glutamine, carbonate, and phosphate donated by ATP, constituting the first step of 2 biosynthetic pathways, one leading to arginine and/or urea and the other to pyrimidine nucleotides. The small subunit (glutamine amidotransferase) binds and cleaves glutamine to supply the large subunit with the substrate ammonia.</text>
</comment>
<comment type="catalytic activity">
    <reaction evidence="1">
        <text>hydrogencarbonate + L-glutamine + 2 ATP + H2O = carbamoyl phosphate + L-glutamate + 2 ADP + phosphate + 2 H(+)</text>
        <dbReference type="Rhea" id="RHEA:18633"/>
        <dbReference type="ChEBI" id="CHEBI:15377"/>
        <dbReference type="ChEBI" id="CHEBI:15378"/>
        <dbReference type="ChEBI" id="CHEBI:17544"/>
        <dbReference type="ChEBI" id="CHEBI:29985"/>
        <dbReference type="ChEBI" id="CHEBI:30616"/>
        <dbReference type="ChEBI" id="CHEBI:43474"/>
        <dbReference type="ChEBI" id="CHEBI:58228"/>
        <dbReference type="ChEBI" id="CHEBI:58359"/>
        <dbReference type="ChEBI" id="CHEBI:456216"/>
        <dbReference type="EC" id="6.3.5.5"/>
    </reaction>
</comment>
<comment type="catalytic activity">
    <molecule>Carbamoyl phosphate synthase small chain</molecule>
    <reaction evidence="1">
        <text>L-glutamine + H2O = L-glutamate + NH4(+)</text>
        <dbReference type="Rhea" id="RHEA:15889"/>
        <dbReference type="ChEBI" id="CHEBI:15377"/>
        <dbReference type="ChEBI" id="CHEBI:28938"/>
        <dbReference type="ChEBI" id="CHEBI:29985"/>
        <dbReference type="ChEBI" id="CHEBI:58359"/>
    </reaction>
</comment>
<comment type="pathway">
    <text evidence="1">Amino-acid biosynthesis; L-arginine biosynthesis; carbamoyl phosphate from bicarbonate: step 1/1.</text>
</comment>
<comment type="pathway">
    <text evidence="1">Pyrimidine metabolism; UMP biosynthesis via de novo pathway; (S)-dihydroorotate from bicarbonate: step 1/3.</text>
</comment>
<comment type="subunit">
    <text evidence="1">Composed of two chains; the small (or glutamine) chain promotes the hydrolysis of glutamine to ammonia, which is used by the large (or ammonia) chain to synthesize carbamoyl phosphate. Tetramer of heterodimers (alpha,beta)4.</text>
</comment>
<comment type="similarity">
    <text evidence="1">Belongs to the CarA family.</text>
</comment>
<evidence type="ECO:0000255" key="1">
    <source>
        <dbReference type="HAMAP-Rule" id="MF_01209"/>
    </source>
</evidence>
<name>CARA_RHILO</name>
<feature type="chain" id="PRO_0000112309" description="Carbamoyl phosphate synthase small chain">
    <location>
        <begin position="1"/>
        <end position="398"/>
    </location>
</feature>
<feature type="domain" description="Glutamine amidotransferase type-1" evidence="1">
    <location>
        <begin position="203"/>
        <end position="391"/>
    </location>
</feature>
<feature type="region of interest" description="CPSase" evidence="1">
    <location>
        <begin position="1"/>
        <end position="199"/>
    </location>
</feature>
<feature type="active site" description="Nucleophile" evidence="1">
    <location>
        <position position="280"/>
    </location>
</feature>
<feature type="active site" evidence="1">
    <location>
        <position position="364"/>
    </location>
</feature>
<feature type="active site" evidence="1">
    <location>
        <position position="366"/>
    </location>
</feature>
<feature type="binding site" evidence="1">
    <location>
        <position position="54"/>
    </location>
    <ligand>
        <name>L-glutamine</name>
        <dbReference type="ChEBI" id="CHEBI:58359"/>
    </ligand>
</feature>
<feature type="binding site" evidence="1">
    <location>
        <position position="251"/>
    </location>
    <ligand>
        <name>L-glutamine</name>
        <dbReference type="ChEBI" id="CHEBI:58359"/>
    </ligand>
</feature>
<feature type="binding site" evidence="1">
    <location>
        <position position="253"/>
    </location>
    <ligand>
        <name>L-glutamine</name>
        <dbReference type="ChEBI" id="CHEBI:58359"/>
    </ligand>
</feature>
<feature type="binding site" evidence="1">
    <location>
        <position position="281"/>
    </location>
    <ligand>
        <name>L-glutamine</name>
        <dbReference type="ChEBI" id="CHEBI:58359"/>
    </ligand>
</feature>
<feature type="binding site" evidence="1">
    <location>
        <position position="284"/>
    </location>
    <ligand>
        <name>L-glutamine</name>
        <dbReference type="ChEBI" id="CHEBI:58359"/>
    </ligand>
</feature>
<feature type="binding site" evidence="1">
    <location>
        <position position="322"/>
    </location>
    <ligand>
        <name>L-glutamine</name>
        <dbReference type="ChEBI" id="CHEBI:58359"/>
    </ligand>
</feature>
<feature type="binding site" evidence="1">
    <location>
        <position position="324"/>
    </location>
    <ligand>
        <name>L-glutamine</name>
        <dbReference type="ChEBI" id="CHEBI:58359"/>
    </ligand>
</feature>
<feature type="binding site" evidence="1">
    <location>
        <position position="325"/>
    </location>
    <ligand>
        <name>L-glutamine</name>
        <dbReference type="ChEBI" id="CHEBI:58359"/>
    </ligand>
</feature>
<organism>
    <name type="scientific">Mesorhizobium japonicum (strain LMG 29417 / CECT 9101 / MAFF 303099)</name>
    <name type="common">Mesorhizobium loti (strain MAFF 303099)</name>
    <dbReference type="NCBI Taxonomy" id="266835"/>
    <lineage>
        <taxon>Bacteria</taxon>
        <taxon>Pseudomonadati</taxon>
        <taxon>Pseudomonadota</taxon>
        <taxon>Alphaproteobacteria</taxon>
        <taxon>Hyphomicrobiales</taxon>
        <taxon>Phyllobacteriaceae</taxon>
        <taxon>Mesorhizobium</taxon>
    </lineage>
</organism>
<protein>
    <recommendedName>
        <fullName evidence="1">Carbamoyl phosphate synthase small chain</fullName>
        <ecNumber evidence="1">6.3.5.5</ecNumber>
    </recommendedName>
    <alternativeName>
        <fullName evidence="1">Carbamoyl phosphate synthetase glutamine chain</fullName>
    </alternativeName>
</protein>
<proteinExistence type="inferred from homology"/>
<sequence length="398" mass="42345">MTPAWATEKPTALLVLADGTVIEGRGLGATGSAVAEVCFNTALTGYQEILTDPSYAGQIVTFTFPHIGNIGTNGEDIEDLNPAARAGAVGAVFKADVTNPSNYRAAGHLDQWLKKRGIVALSGIDTRALTALIREKGMPNAVIAHAPDGVFDLDDLKQRAAAWSGLIGLDLAKEVTSGQSSVWRETPWVWNEGFGEQAEPSLHVVAIDYGVKRNILRLLAGLGAKVTVVPANTGSEEILAMQPDGIFLSNGPGDPEATGDYAVPVIQDLLKTDIPVFGICLGHQMLALALGGRTAKMHQGHHGANHPVKDHTTGKVEIVSMNHGFAVDADSLPEGVEETHVSLFDGSNCGIALTGRPVFSVQHHPEASPGPQDSHYLFRRFVNLIREKRGEEQLAERV</sequence>
<accession>Q98IA7</accession>